<proteinExistence type="inferred from homology"/>
<feature type="chain" id="PRO_0000263833" description="Translation initiation factor IF-1">
    <location>
        <begin position="1"/>
        <end position="71"/>
    </location>
</feature>
<feature type="domain" description="S1-like" evidence="1">
    <location>
        <begin position="1"/>
        <end position="71"/>
    </location>
</feature>
<accession>Q4FNE1</accession>
<name>IF1_PELUB</name>
<gene>
    <name evidence="1" type="primary">infA</name>
    <name type="ordered locus">SAR11_0476</name>
</gene>
<comment type="function">
    <text evidence="1">One of the essential components for the initiation of protein synthesis. Stabilizes the binding of IF-2 and IF-3 on the 30S subunit to which N-formylmethionyl-tRNA(fMet) subsequently binds. Helps modulate mRNA selection, yielding the 30S pre-initiation complex (PIC). Upon addition of the 50S ribosomal subunit IF-1, IF-2 and IF-3 are released leaving the mature 70S translation initiation complex.</text>
</comment>
<comment type="subunit">
    <text evidence="1">Component of the 30S ribosomal translation pre-initiation complex which assembles on the 30S ribosome in the order IF-2 and IF-3, IF-1 and N-formylmethionyl-tRNA(fMet); mRNA recruitment can occur at any time during PIC assembly.</text>
</comment>
<comment type="subcellular location">
    <subcellularLocation>
        <location evidence="1">Cytoplasm</location>
    </subcellularLocation>
</comment>
<comment type="similarity">
    <text evidence="1">Belongs to the IF-1 family.</text>
</comment>
<evidence type="ECO:0000255" key="1">
    <source>
        <dbReference type="HAMAP-Rule" id="MF_00075"/>
    </source>
</evidence>
<protein>
    <recommendedName>
        <fullName evidence="1">Translation initiation factor IF-1</fullName>
    </recommendedName>
</protein>
<sequence>MSKQEMLSFSGIVEDLLPNAMFRVKLENGHIVTAHAAGKLRKNRIRVLQGDKVQVEMTPYDLTKGRITFRG</sequence>
<dbReference type="EMBL" id="CP000084">
    <property type="protein sequence ID" value="AAZ21298.1"/>
    <property type="molecule type" value="Genomic_DNA"/>
</dbReference>
<dbReference type="SMR" id="Q4FNE1"/>
<dbReference type="STRING" id="335992.SAR11_0476"/>
<dbReference type="KEGG" id="pub:SAR11_0476"/>
<dbReference type="eggNOG" id="COG0361">
    <property type="taxonomic scope" value="Bacteria"/>
</dbReference>
<dbReference type="HOGENOM" id="CLU_151267_1_0_5"/>
<dbReference type="OrthoDB" id="9803250at2"/>
<dbReference type="Proteomes" id="UP000002528">
    <property type="component" value="Chromosome"/>
</dbReference>
<dbReference type="GO" id="GO:0005829">
    <property type="term" value="C:cytosol"/>
    <property type="evidence" value="ECO:0007669"/>
    <property type="project" value="TreeGrafter"/>
</dbReference>
<dbReference type="GO" id="GO:0043022">
    <property type="term" value="F:ribosome binding"/>
    <property type="evidence" value="ECO:0007669"/>
    <property type="project" value="UniProtKB-UniRule"/>
</dbReference>
<dbReference type="GO" id="GO:0019843">
    <property type="term" value="F:rRNA binding"/>
    <property type="evidence" value="ECO:0007669"/>
    <property type="project" value="UniProtKB-UniRule"/>
</dbReference>
<dbReference type="GO" id="GO:0003743">
    <property type="term" value="F:translation initiation factor activity"/>
    <property type="evidence" value="ECO:0007669"/>
    <property type="project" value="UniProtKB-UniRule"/>
</dbReference>
<dbReference type="CDD" id="cd04451">
    <property type="entry name" value="S1_IF1"/>
    <property type="match status" value="1"/>
</dbReference>
<dbReference type="FunFam" id="2.40.50.140:FF:000002">
    <property type="entry name" value="Translation initiation factor IF-1"/>
    <property type="match status" value="1"/>
</dbReference>
<dbReference type="Gene3D" id="2.40.50.140">
    <property type="entry name" value="Nucleic acid-binding proteins"/>
    <property type="match status" value="1"/>
</dbReference>
<dbReference type="HAMAP" id="MF_00075">
    <property type="entry name" value="IF_1"/>
    <property type="match status" value="1"/>
</dbReference>
<dbReference type="InterPro" id="IPR012340">
    <property type="entry name" value="NA-bd_OB-fold"/>
</dbReference>
<dbReference type="InterPro" id="IPR006196">
    <property type="entry name" value="RNA-binding_domain_S1_IF1"/>
</dbReference>
<dbReference type="InterPro" id="IPR004368">
    <property type="entry name" value="TIF_IF1"/>
</dbReference>
<dbReference type="NCBIfam" id="TIGR00008">
    <property type="entry name" value="infA"/>
    <property type="match status" value="1"/>
</dbReference>
<dbReference type="PANTHER" id="PTHR33370">
    <property type="entry name" value="TRANSLATION INITIATION FACTOR IF-1, CHLOROPLASTIC"/>
    <property type="match status" value="1"/>
</dbReference>
<dbReference type="PANTHER" id="PTHR33370:SF1">
    <property type="entry name" value="TRANSLATION INITIATION FACTOR IF-1, CHLOROPLASTIC"/>
    <property type="match status" value="1"/>
</dbReference>
<dbReference type="Pfam" id="PF01176">
    <property type="entry name" value="eIF-1a"/>
    <property type="match status" value="1"/>
</dbReference>
<dbReference type="SUPFAM" id="SSF50249">
    <property type="entry name" value="Nucleic acid-binding proteins"/>
    <property type="match status" value="1"/>
</dbReference>
<dbReference type="PROSITE" id="PS50832">
    <property type="entry name" value="S1_IF1_TYPE"/>
    <property type="match status" value="1"/>
</dbReference>
<keyword id="KW-0963">Cytoplasm</keyword>
<keyword id="KW-0396">Initiation factor</keyword>
<keyword id="KW-0648">Protein biosynthesis</keyword>
<keyword id="KW-1185">Reference proteome</keyword>
<keyword id="KW-0694">RNA-binding</keyword>
<keyword id="KW-0699">rRNA-binding</keyword>
<reference key="1">
    <citation type="journal article" date="2005" name="Science">
        <title>Genome streamlining in a cosmopolitan oceanic bacterium.</title>
        <authorList>
            <person name="Giovannoni S.J."/>
            <person name="Tripp H.J."/>
            <person name="Givan S."/>
            <person name="Podar M."/>
            <person name="Vergin K.L."/>
            <person name="Baptista D."/>
            <person name="Bibbs L."/>
            <person name="Eads J."/>
            <person name="Richardson T.H."/>
            <person name="Noordewier M."/>
            <person name="Rappe M.S."/>
            <person name="Short J.M."/>
            <person name="Carrington J.C."/>
            <person name="Mathur E.J."/>
        </authorList>
    </citation>
    <scope>NUCLEOTIDE SEQUENCE [LARGE SCALE GENOMIC DNA]</scope>
    <source>
        <strain>HTCC1062</strain>
    </source>
</reference>
<organism>
    <name type="scientific">Pelagibacter ubique (strain HTCC1062)</name>
    <dbReference type="NCBI Taxonomy" id="335992"/>
    <lineage>
        <taxon>Bacteria</taxon>
        <taxon>Pseudomonadati</taxon>
        <taxon>Pseudomonadota</taxon>
        <taxon>Alphaproteobacteria</taxon>
        <taxon>Candidatus Pelagibacterales</taxon>
        <taxon>Candidatus Pelagibacteraceae</taxon>
        <taxon>Candidatus Pelagibacter</taxon>
    </lineage>
</organism>